<proteinExistence type="inferred from homology"/>
<organism>
    <name type="scientific">Treponema denticola (strain ATCC 35405 / DSM 14222 / CIP 103919 / JCM 8153 / KCTC 15104)</name>
    <dbReference type="NCBI Taxonomy" id="243275"/>
    <lineage>
        <taxon>Bacteria</taxon>
        <taxon>Pseudomonadati</taxon>
        <taxon>Spirochaetota</taxon>
        <taxon>Spirochaetia</taxon>
        <taxon>Spirochaetales</taxon>
        <taxon>Treponemataceae</taxon>
        <taxon>Treponema</taxon>
    </lineage>
</organism>
<reference key="1">
    <citation type="journal article" date="2004" name="Proc. Natl. Acad. Sci. U.S.A.">
        <title>Comparison of the genome of the oral pathogen Treponema denticola with other spirochete genomes.</title>
        <authorList>
            <person name="Seshadri R."/>
            <person name="Myers G.S.A."/>
            <person name="Tettelin H."/>
            <person name="Eisen J.A."/>
            <person name="Heidelberg J.F."/>
            <person name="Dodson R.J."/>
            <person name="Davidsen T.M."/>
            <person name="DeBoy R.T."/>
            <person name="Fouts D.E."/>
            <person name="Haft D.H."/>
            <person name="Selengut J."/>
            <person name="Ren Q."/>
            <person name="Brinkac L.M."/>
            <person name="Madupu R."/>
            <person name="Kolonay J.F."/>
            <person name="Durkin S.A."/>
            <person name="Daugherty S.C."/>
            <person name="Shetty J."/>
            <person name="Shvartsbeyn A."/>
            <person name="Gebregeorgis E."/>
            <person name="Geer K."/>
            <person name="Tsegaye G."/>
            <person name="Malek J.A."/>
            <person name="Ayodeji B."/>
            <person name="Shatsman S."/>
            <person name="McLeod M.P."/>
            <person name="Smajs D."/>
            <person name="Howell J.K."/>
            <person name="Pal S."/>
            <person name="Amin A."/>
            <person name="Vashisth P."/>
            <person name="McNeill T.Z."/>
            <person name="Xiang Q."/>
            <person name="Sodergren E."/>
            <person name="Baca E."/>
            <person name="Weinstock G.M."/>
            <person name="Norris S.J."/>
            <person name="Fraser C.M."/>
            <person name="Paulsen I.T."/>
        </authorList>
    </citation>
    <scope>NUCLEOTIDE SEQUENCE [LARGE SCALE GENOMIC DNA]</scope>
    <source>
        <strain>ATCC 35405 / DSM 14222 / CIP 103919 / JCM 8153 / KCTC 15104</strain>
    </source>
</reference>
<gene>
    <name evidence="1" type="primary">rsmG</name>
    <name type="ordered locus">TDE_2513</name>
</gene>
<feature type="chain" id="PRO_0000184359" description="Ribosomal RNA small subunit methyltransferase G">
    <location>
        <begin position="1"/>
        <end position="254"/>
    </location>
</feature>
<feature type="region of interest" description="Insert">
    <location>
        <begin position="84"/>
        <end position="109"/>
    </location>
</feature>
<feature type="binding site" evidence="1">
    <location>
        <position position="115"/>
    </location>
    <ligand>
        <name>S-adenosyl-L-methionine</name>
        <dbReference type="ChEBI" id="CHEBI:59789"/>
    </ligand>
</feature>
<feature type="binding site" evidence="1">
    <location>
        <position position="120"/>
    </location>
    <ligand>
        <name>S-adenosyl-L-methionine</name>
        <dbReference type="ChEBI" id="CHEBI:59789"/>
    </ligand>
</feature>
<feature type="binding site" evidence="1">
    <location>
        <begin position="171"/>
        <end position="172"/>
    </location>
    <ligand>
        <name>S-adenosyl-L-methionine</name>
        <dbReference type="ChEBI" id="CHEBI:59789"/>
    </ligand>
</feature>
<feature type="binding site" evidence="1">
    <location>
        <position position="185"/>
    </location>
    <ligand>
        <name>S-adenosyl-L-methionine</name>
        <dbReference type="ChEBI" id="CHEBI:59789"/>
    </ligand>
</feature>
<dbReference type="EC" id="2.1.1.-" evidence="1"/>
<dbReference type="EMBL" id="AE017226">
    <property type="protein sequence ID" value="AAS13030.1"/>
    <property type="molecule type" value="Genomic_DNA"/>
</dbReference>
<dbReference type="RefSeq" id="NP_973111.1">
    <property type="nucleotide sequence ID" value="NC_002967.9"/>
</dbReference>
<dbReference type="RefSeq" id="WP_010957250.1">
    <property type="nucleotide sequence ID" value="NC_002967.9"/>
</dbReference>
<dbReference type="SMR" id="Q73JU8"/>
<dbReference type="STRING" id="243275.TDE_2513"/>
<dbReference type="PaxDb" id="243275-TDE_2513"/>
<dbReference type="GeneID" id="2739025"/>
<dbReference type="KEGG" id="tde:TDE_2513"/>
<dbReference type="PATRIC" id="fig|243275.7.peg.2379"/>
<dbReference type="eggNOG" id="COG0357">
    <property type="taxonomic scope" value="Bacteria"/>
</dbReference>
<dbReference type="HOGENOM" id="CLU_065341_2_0_12"/>
<dbReference type="OrthoDB" id="9808773at2"/>
<dbReference type="Proteomes" id="UP000008212">
    <property type="component" value="Chromosome"/>
</dbReference>
<dbReference type="GO" id="GO:0005829">
    <property type="term" value="C:cytosol"/>
    <property type="evidence" value="ECO:0007669"/>
    <property type="project" value="TreeGrafter"/>
</dbReference>
<dbReference type="GO" id="GO:0070043">
    <property type="term" value="F:rRNA (guanine-N7-)-methyltransferase activity"/>
    <property type="evidence" value="ECO:0007669"/>
    <property type="project" value="UniProtKB-UniRule"/>
</dbReference>
<dbReference type="CDD" id="cd02440">
    <property type="entry name" value="AdoMet_MTases"/>
    <property type="match status" value="1"/>
</dbReference>
<dbReference type="Gene3D" id="3.40.50.150">
    <property type="entry name" value="Vaccinia Virus protein VP39"/>
    <property type="match status" value="1"/>
</dbReference>
<dbReference type="HAMAP" id="MF_00074">
    <property type="entry name" value="16SrRNA_methyltr_G"/>
    <property type="match status" value="1"/>
</dbReference>
<dbReference type="InterPro" id="IPR003682">
    <property type="entry name" value="rRNA_ssu_MeTfrase_G"/>
</dbReference>
<dbReference type="InterPro" id="IPR029063">
    <property type="entry name" value="SAM-dependent_MTases_sf"/>
</dbReference>
<dbReference type="NCBIfam" id="TIGR00138">
    <property type="entry name" value="rsmG_gidB"/>
    <property type="match status" value="1"/>
</dbReference>
<dbReference type="PANTHER" id="PTHR31760">
    <property type="entry name" value="S-ADENOSYL-L-METHIONINE-DEPENDENT METHYLTRANSFERASES SUPERFAMILY PROTEIN"/>
    <property type="match status" value="1"/>
</dbReference>
<dbReference type="PANTHER" id="PTHR31760:SF0">
    <property type="entry name" value="S-ADENOSYL-L-METHIONINE-DEPENDENT METHYLTRANSFERASES SUPERFAMILY PROTEIN"/>
    <property type="match status" value="1"/>
</dbReference>
<dbReference type="Pfam" id="PF02527">
    <property type="entry name" value="GidB"/>
    <property type="match status" value="2"/>
</dbReference>
<dbReference type="PIRSF" id="PIRSF003078">
    <property type="entry name" value="GidB"/>
    <property type="match status" value="1"/>
</dbReference>
<dbReference type="SUPFAM" id="SSF53335">
    <property type="entry name" value="S-adenosyl-L-methionine-dependent methyltransferases"/>
    <property type="match status" value="1"/>
</dbReference>
<evidence type="ECO:0000255" key="1">
    <source>
        <dbReference type="HAMAP-Rule" id="MF_00074"/>
    </source>
</evidence>
<accession>Q73JU8</accession>
<comment type="function">
    <text evidence="1">Specifically methylates the N7 position of a guanine in 16S rRNA.</text>
</comment>
<comment type="subcellular location">
    <subcellularLocation>
        <location evidence="1">Cytoplasm</location>
    </subcellularLocation>
</comment>
<comment type="similarity">
    <text evidence="1">Belongs to the methyltransferase superfamily. RNA methyltransferase RsmG family.</text>
</comment>
<keyword id="KW-0963">Cytoplasm</keyword>
<keyword id="KW-0489">Methyltransferase</keyword>
<keyword id="KW-1185">Reference proteome</keyword>
<keyword id="KW-0698">rRNA processing</keyword>
<keyword id="KW-0949">S-adenosyl-L-methionine</keyword>
<keyword id="KW-0808">Transferase</keyword>
<sequence length="254" mass="28849">MDTDKLLSKDLLSNGILLKGLKELGINEKAHNKLSKLLNIYMRELKMFNASFNLVKVKDDEELIVAHILDSLSAWRFFYNETKNTESKTSLNNAETKNTNEALLTSEPFYIADAGTGAGFPGVPLAALFISLGNLDVKLSLIERMQKRCTFLENIKAVLQLNNTEIIESEAEKAPQNKFDIVTCRAFHTLDKHILQTLLNLAKPKGKLFLYKAAKEKINEETELIKKEGLNYKTEKLDVPFLKKERHLLIIEKP</sequence>
<protein>
    <recommendedName>
        <fullName evidence="1">Ribosomal RNA small subunit methyltransferase G</fullName>
        <ecNumber evidence="1">2.1.1.-</ecNumber>
    </recommendedName>
    <alternativeName>
        <fullName evidence="1">16S rRNA 7-methylguanosine methyltransferase</fullName>
        <shortName evidence="1">16S rRNA m7G methyltransferase</shortName>
    </alternativeName>
</protein>
<name>RSMG_TREDE</name>